<dbReference type="EC" id="3.4.21.-" evidence="1"/>
<dbReference type="EMBL" id="KC537786">
    <property type="protein sequence ID" value="AGK44856.1"/>
    <property type="molecule type" value="mRNA"/>
</dbReference>
<dbReference type="SMR" id="N0AAE6"/>
<dbReference type="MEROPS" id="S01.331"/>
<dbReference type="GO" id="GO:0005576">
    <property type="term" value="C:extracellular region"/>
    <property type="evidence" value="ECO:0000250"/>
    <property type="project" value="UniProtKB"/>
</dbReference>
<dbReference type="GO" id="GO:0005615">
    <property type="term" value="C:extracellular space"/>
    <property type="evidence" value="ECO:0007669"/>
    <property type="project" value="TreeGrafter"/>
</dbReference>
<dbReference type="GO" id="GO:0043245">
    <property type="term" value="C:extraorganismal space"/>
    <property type="evidence" value="ECO:0000250"/>
    <property type="project" value="UniProtKB"/>
</dbReference>
<dbReference type="GO" id="GO:0004252">
    <property type="term" value="F:serine-type endopeptidase activity"/>
    <property type="evidence" value="ECO:0007669"/>
    <property type="project" value="InterPro"/>
</dbReference>
<dbReference type="GO" id="GO:0008236">
    <property type="term" value="F:serine-type peptidase activity"/>
    <property type="evidence" value="ECO:0000250"/>
    <property type="project" value="UniProtKB"/>
</dbReference>
<dbReference type="GO" id="GO:0090729">
    <property type="term" value="F:toxin activity"/>
    <property type="evidence" value="ECO:0000250"/>
    <property type="project" value="UniProtKB"/>
</dbReference>
<dbReference type="GO" id="GO:0006508">
    <property type="term" value="P:proteolysis"/>
    <property type="evidence" value="ECO:0007669"/>
    <property type="project" value="UniProtKB-KW"/>
</dbReference>
<dbReference type="CDD" id="cd00190">
    <property type="entry name" value="Tryp_SPc"/>
    <property type="match status" value="1"/>
</dbReference>
<dbReference type="FunFam" id="2.40.10.10:FF:000158">
    <property type="entry name" value="Thrombin-like enzyme saxthrombin"/>
    <property type="match status" value="1"/>
</dbReference>
<dbReference type="FunFam" id="2.40.10.10:FF:000153">
    <property type="entry name" value="Venom plasminogen activator TSV-PA"/>
    <property type="match status" value="1"/>
</dbReference>
<dbReference type="Gene3D" id="2.40.10.10">
    <property type="entry name" value="Trypsin-like serine proteases"/>
    <property type="match status" value="2"/>
</dbReference>
<dbReference type="InterPro" id="IPR009003">
    <property type="entry name" value="Peptidase_S1_PA"/>
</dbReference>
<dbReference type="InterPro" id="IPR043504">
    <property type="entry name" value="Peptidase_S1_PA_chymotrypsin"/>
</dbReference>
<dbReference type="InterPro" id="IPR001314">
    <property type="entry name" value="Peptidase_S1A"/>
</dbReference>
<dbReference type="InterPro" id="IPR050127">
    <property type="entry name" value="Serine_Proteases_S1"/>
</dbReference>
<dbReference type="InterPro" id="IPR001254">
    <property type="entry name" value="Trypsin_dom"/>
</dbReference>
<dbReference type="InterPro" id="IPR018114">
    <property type="entry name" value="TRYPSIN_HIS"/>
</dbReference>
<dbReference type="InterPro" id="IPR033116">
    <property type="entry name" value="TRYPSIN_SER"/>
</dbReference>
<dbReference type="PANTHER" id="PTHR24264:SF15">
    <property type="entry name" value="RIKEN CDNA 2210010C04 GENE"/>
    <property type="match status" value="1"/>
</dbReference>
<dbReference type="PANTHER" id="PTHR24264">
    <property type="entry name" value="TRYPSIN-RELATED"/>
    <property type="match status" value="1"/>
</dbReference>
<dbReference type="Pfam" id="PF00089">
    <property type="entry name" value="Trypsin"/>
    <property type="match status" value="1"/>
</dbReference>
<dbReference type="PRINTS" id="PR00722">
    <property type="entry name" value="CHYMOTRYPSIN"/>
</dbReference>
<dbReference type="SMART" id="SM00020">
    <property type="entry name" value="Tryp_SPc"/>
    <property type="match status" value="1"/>
</dbReference>
<dbReference type="SUPFAM" id="SSF50494">
    <property type="entry name" value="Trypsin-like serine proteases"/>
    <property type="match status" value="1"/>
</dbReference>
<dbReference type="PROSITE" id="PS50240">
    <property type="entry name" value="TRYPSIN_DOM"/>
    <property type="match status" value="1"/>
</dbReference>
<dbReference type="PROSITE" id="PS00134">
    <property type="entry name" value="TRYPSIN_HIS"/>
    <property type="match status" value="1"/>
</dbReference>
<dbReference type="PROSITE" id="PS00135">
    <property type="entry name" value="TRYPSIN_SER"/>
    <property type="match status" value="1"/>
</dbReference>
<evidence type="ECO:0000250" key="1">
    <source>
        <dbReference type="UniProtKB" id="N0A5N4"/>
    </source>
</evidence>
<evidence type="ECO:0000255" key="2">
    <source>
        <dbReference type="PROSITE-ProRule" id="PRU00274"/>
    </source>
</evidence>
<evidence type="ECO:0000255" key="3">
    <source>
        <dbReference type="PROSITE-ProRule" id="PRU00498"/>
    </source>
</evidence>
<evidence type="ECO:0000269" key="4">
    <source>
    </source>
</evidence>
<evidence type="ECO:0000303" key="5">
    <source>
    </source>
</evidence>
<evidence type="ECO:0000305" key="6"/>
<evidence type="ECO:0000312" key="7">
    <source>
        <dbReference type="EMBL" id="AGK44856.1"/>
    </source>
</evidence>
<feature type="propeptide" id="PRO_0000457557" evidence="6">
    <location>
        <begin position="1" status="less than"/>
        <end position="1"/>
    </location>
</feature>
<feature type="chain" id="PRO_0000457558" description="Thrombin-like enzyme agkihpin-1" evidence="6">
    <location>
        <begin position="2"/>
        <end position="237"/>
    </location>
</feature>
<feature type="domain" description="Peptidase S1" evidence="2">
    <location>
        <begin position="2"/>
        <end position="228"/>
    </location>
</feature>
<feature type="active site" description="Charge relay system" evidence="2">
    <location>
        <position position="42"/>
    </location>
</feature>
<feature type="active site" description="Charge relay system" evidence="2">
    <location>
        <position position="87"/>
    </location>
</feature>
<feature type="active site" description="Charge relay system" evidence="2">
    <location>
        <position position="183"/>
    </location>
</feature>
<feature type="glycosylation site" description="N-linked (GlcNAc...) asparagine" evidence="3">
    <location>
        <position position="80"/>
    </location>
</feature>
<feature type="disulfide bond" evidence="2">
    <location>
        <begin position="27"/>
        <end position="43"/>
    </location>
</feature>
<feature type="disulfide bond" evidence="2">
    <location>
        <begin position="119"/>
        <end position="189"/>
    </location>
</feature>
<feature type="disulfide bond" evidence="2">
    <location>
        <begin position="151"/>
        <end position="168"/>
    </location>
</feature>
<feature type="disulfide bond" evidence="2">
    <location>
        <begin position="179"/>
        <end position="204"/>
    </location>
</feature>
<feature type="non-terminal residue" evidence="6">
    <location>
        <position position="1"/>
    </location>
</feature>
<comment type="function">
    <text evidence="1">Thrombin-like enzyme that shows fibrinogenolytic activity against bovine fibrinogen alpha and beta chains, but not gamma chain. Hydrolyzes fibrin. Enhances ADP-induced human platelet aggregation. Has arginine esterase activity for TAMe (tosyl-arginine methyl ester) substrate. Reduces thrombin-induced thrombosis. Does not have hemorrhagic activity. Reduces the motility of human liver cancer HepG2 cells in a wound-healing assay.</text>
</comment>
<comment type="activity regulation">
    <text evidence="1">The hydrolysis of TAMe (tosyl-arginine methyl ester) substrate is activated by Ca(2+), Fe(3+), Mg(2+) and Zn(2+), and inhibited by EDTA, PMSF and DTT.</text>
</comment>
<comment type="subcellular location">
    <subcellularLocation>
        <location evidence="1">Secreted</location>
    </subcellularLocation>
</comment>
<comment type="tissue specificity">
    <text evidence="4">Expressed by the venom gland (PubMed:27666486).</text>
</comment>
<comment type="similarity">
    <text evidence="6">Belongs to the peptidase S1 family. Snake venom subfamily.</text>
</comment>
<accession>N0AAE6</accession>
<proteinExistence type="evidence at transcript level"/>
<name>VAE1_GLOHA</name>
<organism evidence="7">
    <name type="scientific">Gloydius halys</name>
    <name type="common">Chinese water mocassin</name>
    <name type="synonym">Agkistrodon halys</name>
    <dbReference type="NCBI Taxonomy" id="8714"/>
    <lineage>
        <taxon>Eukaryota</taxon>
        <taxon>Metazoa</taxon>
        <taxon>Chordata</taxon>
        <taxon>Craniata</taxon>
        <taxon>Vertebrata</taxon>
        <taxon>Euteleostomi</taxon>
        <taxon>Lepidosauria</taxon>
        <taxon>Squamata</taxon>
        <taxon>Bifurcata</taxon>
        <taxon>Unidentata</taxon>
        <taxon>Episquamata</taxon>
        <taxon>Toxicofera</taxon>
        <taxon>Serpentes</taxon>
        <taxon>Colubroidea</taxon>
        <taxon>Viperidae</taxon>
        <taxon>Crotalinae</taxon>
        <taxon>Gloydius</taxon>
    </lineage>
</organism>
<protein>
    <recommendedName>
        <fullName evidence="5">Thrombin-like enzyme agkihpin-1</fullName>
        <shortName evidence="6">TLE agkihpin-1</shortName>
        <ecNumber evidence="1">3.4.21.-</ecNumber>
    </recommendedName>
    <alternativeName>
        <fullName evidence="7">Agkihpin</fullName>
    </alternativeName>
    <alternativeName>
        <fullName evidence="5">Snake venom arginine esterase</fullName>
        <shortName evidence="5">SVAE</shortName>
    </alternativeName>
    <alternativeName>
        <fullName evidence="5">Snake venom thrombin-like enzyme</fullName>
        <shortName evidence="5">SVTLE</shortName>
    </alternativeName>
</protein>
<sequence length="237" mass="26185">MILGDDECNINEHRFLVALYTSRTLFCGGTLINQEWVLTAAHCNMEDIQIKLGMHSKKVPNEDEQKRVPKEKFFCLSSKNYTLWDKDIMLIRLDSPVKNSAHIAPLSLPSSPPSVGSVCRTIGWGRISSTKETYPDVPHCVNINLLEYEMCRAPYPEFELPATSRTLCAGILEGGKDTCVGDSGGPLICNGQFQGIASWGDDPCAQPHKPAAYTKVFDHLDWIENIIAGNTDASCPP</sequence>
<reference evidence="7" key="1">
    <citation type="journal article" date="2016" name="Toxicon">
        <title>Agkihpin, a novel SVTLE from Gloydius halys Pallas, promotes platelet aggregation in vitro and inhibits thrombus formation in vivo in murine models of thrombosis.</title>
        <authorList>
            <person name="Xie H."/>
            <person name="Huang M."/>
            <person name="Hu Q."/>
            <person name="Sun K."/>
            <person name="Wu H."/>
            <person name="Shu W."/>
            <person name="Li X."/>
            <person name="Fang L."/>
        </authorList>
    </citation>
    <scope>NUCLEOTIDE SEQUENCE [MRNA]</scope>
    <scope>TISSUE SPECIFICITY</scope>
    <source>
        <tissue evidence="5">Venom gland</tissue>
    </source>
</reference>
<keyword id="KW-1015">Disulfide bond</keyword>
<keyword id="KW-1206">Fibrinogenolytic toxin</keyword>
<keyword id="KW-1205">Fibrinolytic toxin</keyword>
<keyword id="KW-0325">Glycoprotein</keyword>
<keyword id="KW-1199">Hemostasis impairing toxin</keyword>
<keyword id="KW-0378">Hydrolase</keyword>
<keyword id="KW-1202">Platelet aggregation activating toxin</keyword>
<keyword id="KW-0645">Protease</keyword>
<keyword id="KW-0964">Secreted</keyword>
<keyword id="KW-0720">Serine protease</keyword>
<keyword id="KW-0800">Toxin</keyword>